<sequence length="615" mass="68057">MFQVLKFCWKVLCFIRDLVMNVVFLGFVLLLVAIISFSSGGKKSTALTSEGALLLNLDGYLADNRDETLRWQDALSELNGEHVPRKISTFDVVFAIQQAEDDPKIKGLVLDLNYFEGADLPALDFIGGAISHFKDAGKPVIAYADNYSQGQYYLASFADEIYLNSIGSVDIHGLSQENLYFKEMLDKLAVTPHIFRVGTYKSAVEPFLRNDMSAEAKANMQRWLGEMWNNYVLSVSENRNIKKDRILPNAKQYLAELKALKGNSTAYAQQRGLVTDVVTRLDLDKKLSALFGKGSDGKANLIEFDDYLTQLPDRLEHYNVPNKIAVVNVEGTIIDGESDEENAGGDTIARILRKAHDDNSVKAVILRVNSPGGSAFASEIIRQETENLQKIGKPVIVSMGAMAASGGYWISSTADYIIADSNTITGSIGIFTMFPTFENSIKKIGVHADGVSTTELANTSAFSPLAKPVQDIYQTEIEHGYDRFLEIVSKGRQLSKTQVDKLAQGQVWLGSDAFQNGLVDEIGSFNEAVNKAEQLVNQRQDTAVQDFSVEWFTDDNVSLISTLLSDTKKGAQEQLVKWLGLPAPIQKLQKELNILTKFNDPKGQYLYCLNCGKVK</sequence>
<evidence type="ECO:0000250" key="1"/>
<evidence type="ECO:0000255" key="2"/>
<evidence type="ECO:0000305" key="3"/>
<organism>
    <name type="scientific">Haemophilus influenzae (strain ATCC 51907 / DSM 11121 / KW20 / Rd)</name>
    <dbReference type="NCBI Taxonomy" id="71421"/>
    <lineage>
        <taxon>Bacteria</taxon>
        <taxon>Pseudomonadati</taxon>
        <taxon>Pseudomonadota</taxon>
        <taxon>Gammaproteobacteria</taxon>
        <taxon>Pasteurellales</taxon>
        <taxon>Pasteurellaceae</taxon>
        <taxon>Haemophilus</taxon>
    </lineage>
</organism>
<accession>P45243</accession>
<dbReference type="EC" id="3.4.21.-"/>
<dbReference type="EMBL" id="L42023">
    <property type="protein sequence ID" value="AAC23191.1"/>
    <property type="molecule type" value="Genomic_DNA"/>
</dbReference>
<dbReference type="PIR" id="F64128">
    <property type="entry name" value="F64128"/>
</dbReference>
<dbReference type="RefSeq" id="NP_439690.1">
    <property type="nucleotide sequence ID" value="NC_000907.1"/>
</dbReference>
<dbReference type="SMR" id="P45243"/>
<dbReference type="STRING" id="71421.HI_1541"/>
<dbReference type="EnsemblBacteria" id="AAC23191">
    <property type="protein sequence ID" value="AAC23191"/>
    <property type="gene ID" value="HI_1541"/>
</dbReference>
<dbReference type="KEGG" id="hin:HI_1541"/>
<dbReference type="PATRIC" id="fig|71421.8.peg.1612"/>
<dbReference type="eggNOG" id="COG0616">
    <property type="taxonomic scope" value="Bacteria"/>
</dbReference>
<dbReference type="HOGENOM" id="CLU_008856_1_1_6"/>
<dbReference type="OrthoDB" id="9764363at2"/>
<dbReference type="PhylomeDB" id="P45243"/>
<dbReference type="BioCyc" id="HINF71421:G1GJ1-1561-MONOMER"/>
<dbReference type="Proteomes" id="UP000000579">
    <property type="component" value="Chromosome"/>
</dbReference>
<dbReference type="GO" id="GO:0005886">
    <property type="term" value="C:plasma membrane"/>
    <property type="evidence" value="ECO:0007669"/>
    <property type="project" value="UniProtKB-SubCell"/>
</dbReference>
<dbReference type="GO" id="GO:0008236">
    <property type="term" value="F:serine-type peptidase activity"/>
    <property type="evidence" value="ECO:0007669"/>
    <property type="project" value="UniProtKB-KW"/>
</dbReference>
<dbReference type="GO" id="GO:0006465">
    <property type="term" value="P:signal peptide processing"/>
    <property type="evidence" value="ECO:0007669"/>
    <property type="project" value="InterPro"/>
</dbReference>
<dbReference type="CDD" id="cd07018">
    <property type="entry name" value="S49_SppA_67K_type"/>
    <property type="match status" value="1"/>
</dbReference>
<dbReference type="CDD" id="cd07023">
    <property type="entry name" value="S49_Sppa_N_C"/>
    <property type="match status" value="1"/>
</dbReference>
<dbReference type="Gene3D" id="6.20.330.10">
    <property type="match status" value="1"/>
</dbReference>
<dbReference type="Gene3D" id="3.90.226.10">
    <property type="entry name" value="2-enoyl-CoA Hydratase, Chain A, domain 1"/>
    <property type="match status" value="3"/>
</dbReference>
<dbReference type="InterPro" id="IPR029045">
    <property type="entry name" value="ClpP/crotonase-like_dom_sf"/>
</dbReference>
<dbReference type="InterPro" id="IPR004634">
    <property type="entry name" value="Pept_S49_pIV"/>
</dbReference>
<dbReference type="InterPro" id="IPR004635">
    <property type="entry name" value="Pept_S49_SppA"/>
</dbReference>
<dbReference type="InterPro" id="IPR002142">
    <property type="entry name" value="Peptidase_S49"/>
</dbReference>
<dbReference type="InterPro" id="IPR047217">
    <property type="entry name" value="S49_SppA_67K_type_N"/>
</dbReference>
<dbReference type="InterPro" id="IPR047272">
    <property type="entry name" value="S49_SppA_C"/>
</dbReference>
<dbReference type="NCBIfam" id="TIGR00705">
    <property type="entry name" value="SppA_67K"/>
    <property type="match status" value="1"/>
</dbReference>
<dbReference type="NCBIfam" id="TIGR00706">
    <property type="entry name" value="SppA_dom"/>
    <property type="match status" value="1"/>
</dbReference>
<dbReference type="PANTHER" id="PTHR33209:SF1">
    <property type="entry name" value="PEPTIDASE S49 DOMAIN-CONTAINING PROTEIN"/>
    <property type="match status" value="1"/>
</dbReference>
<dbReference type="PANTHER" id="PTHR33209">
    <property type="entry name" value="PROTEASE 4"/>
    <property type="match status" value="1"/>
</dbReference>
<dbReference type="Pfam" id="PF01343">
    <property type="entry name" value="Peptidase_S49"/>
    <property type="match status" value="2"/>
</dbReference>
<dbReference type="PIRSF" id="PIRSF001217">
    <property type="entry name" value="Protease_4_SppA"/>
    <property type="match status" value="1"/>
</dbReference>
<dbReference type="SUPFAM" id="SSF52096">
    <property type="entry name" value="ClpP/crotonase"/>
    <property type="match status" value="2"/>
</dbReference>
<reference key="1">
    <citation type="journal article" date="1995" name="Science">
        <title>Whole-genome random sequencing and assembly of Haemophilus influenzae Rd.</title>
        <authorList>
            <person name="Fleischmann R.D."/>
            <person name="Adams M.D."/>
            <person name="White O."/>
            <person name="Clayton R.A."/>
            <person name="Kirkness E.F."/>
            <person name="Kerlavage A.R."/>
            <person name="Bult C.J."/>
            <person name="Tomb J.-F."/>
            <person name="Dougherty B.A."/>
            <person name="Merrick J.M."/>
            <person name="McKenney K."/>
            <person name="Sutton G.G."/>
            <person name="FitzHugh W."/>
            <person name="Fields C.A."/>
            <person name="Gocayne J.D."/>
            <person name="Scott J.D."/>
            <person name="Shirley R."/>
            <person name="Liu L.-I."/>
            <person name="Glodek A."/>
            <person name="Kelley J.M."/>
            <person name="Weidman J.F."/>
            <person name="Phillips C.A."/>
            <person name="Spriggs T."/>
            <person name="Hedblom E."/>
            <person name="Cotton M.D."/>
            <person name="Utterback T.R."/>
            <person name="Hanna M.C."/>
            <person name="Nguyen D.T."/>
            <person name="Saudek D.M."/>
            <person name="Brandon R.C."/>
            <person name="Fine L.D."/>
            <person name="Fritchman J.L."/>
            <person name="Fuhrmann J.L."/>
            <person name="Geoghagen N.S.M."/>
            <person name="Gnehm C.L."/>
            <person name="McDonald L.A."/>
            <person name="Small K.V."/>
            <person name="Fraser C.M."/>
            <person name="Smith H.O."/>
            <person name="Venter J.C."/>
        </authorList>
    </citation>
    <scope>NUCLEOTIDE SEQUENCE [LARGE SCALE GENOMIC DNA]</scope>
    <source>
        <strain>ATCC 51907 / DSM 11121 / KW20 / Rd</strain>
    </source>
</reference>
<reference key="2">
    <citation type="journal article" date="2000" name="Electrophoresis">
        <title>Two-dimensional map of the proteome of Haemophilus influenzae.</title>
        <authorList>
            <person name="Langen H."/>
            <person name="Takacs B."/>
            <person name="Evers S."/>
            <person name="Berndt P."/>
            <person name="Lahm H.W."/>
            <person name="Wipf B."/>
            <person name="Gray C."/>
            <person name="Fountoulakis M."/>
        </authorList>
    </citation>
    <scope>IDENTIFICATION BY MASS SPECTROMETRY</scope>
    <source>
        <strain>ATCC 51907 / DSM 11121 / KW20 / Rd</strain>
    </source>
</reference>
<comment type="function">
    <text evidence="1">Digests cleaved signal peptides in vitro, its in vivo function is unknown. This activity is necessary to maintain proper secretion of mature proteins across the membrane (By similarity).</text>
</comment>
<comment type="subunit">
    <text evidence="1">Homotetramer.</text>
</comment>
<comment type="subcellular location">
    <subcellularLocation>
        <location evidence="1">Cell inner membrane</location>
        <topology evidence="1">Single-pass membrane protein</topology>
    </subcellularLocation>
</comment>
<comment type="similarity">
    <text evidence="3">Belongs to the peptidase S49 family.</text>
</comment>
<gene>
    <name type="primary">sppA</name>
    <name type="ordered locus">HI_1541</name>
</gene>
<name>SPPA_HAEIN</name>
<proteinExistence type="evidence at protein level"/>
<keyword id="KW-0997">Cell inner membrane</keyword>
<keyword id="KW-1003">Cell membrane</keyword>
<keyword id="KW-0378">Hydrolase</keyword>
<keyword id="KW-0472">Membrane</keyword>
<keyword id="KW-0645">Protease</keyword>
<keyword id="KW-1185">Reference proteome</keyword>
<keyword id="KW-0720">Serine protease</keyword>
<keyword id="KW-0812">Transmembrane</keyword>
<keyword id="KW-1133">Transmembrane helix</keyword>
<feature type="chain" id="PRO_0000171439" description="Protease 4">
    <location>
        <begin position="1"/>
        <end position="615"/>
    </location>
</feature>
<feature type="topological domain" description="Cytoplasmic" evidence="2">
    <location>
        <begin position="1"/>
        <end position="17"/>
    </location>
</feature>
<feature type="transmembrane region" description="Helical" evidence="2">
    <location>
        <begin position="18"/>
        <end position="38"/>
    </location>
</feature>
<feature type="topological domain" description="Periplasmic" evidence="2">
    <location>
        <begin position="39"/>
        <end position="615"/>
    </location>
</feature>
<feature type="active site" description="Proton donor/acceptor" evidence="1">
    <location>
        <position position="201"/>
    </location>
</feature>
<feature type="active site" description="Nucleophile" evidence="1">
    <location>
        <position position="405"/>
    </location>
</feature>
<protein>
    <recommendedName>
        <fullName>Protease 4</fullName>
        <ecNumber>3.4.21.-</ecNumber>
    </recommendedName>
    <alternativeName>
        <fullName>Endopeptidase IV</fullName>
    </alternativeName>
    <alternativeName>
        <fullName>Protease IV</fullName>
    </alternativeName>
    <alternativeName>
        <fullName>Signal peptide peptidase</fullName>
    </alternativeName>
</protein>